<gene>
    <name evidence="1" type="primary">pgi</name>
    <name type="ordered locus">MCA1247</name>
</gene>
<protein>
    <recommendedName>
        <fullName evidence="1">Glucose-6-phosphate isomerase</fullName>
        <shortName evidence="1">GPI</shortName>
        <ecNumber evidence="1">5.3.1.9</ecNumber>
    </recommendedName>
    <alternativeName>
        <fullName evidence="1">Phosphoglucose isomerase</fullName>
        <shortName evidence="1">PGI</shortName>
    </alternativeName>
    <alternativeName>
        <fullName evidence="1">Phosphohexose isomerase</fullName>
        <shortName evidence="1">PHI</shortName>
    </alternativeName>
</protein>
<evidence type="ECO:0000255" key="1">
    <source>
        <dbReference type="HAMAP-Rule" id="MF_00473"/>
    </source>
</evidence>
<feature type="chain" id="PRO_0000180672" description="Glucose-6-phosphate isomerase">
    <location>
        <begin position="1"/>
        <end position="546"/>
    </location>
</feature>
<feature type="active site" description="Proton donor" evidence="1">
    <location>
        <position position="353"/>
    </location>
</feature>
<feature type="active site" evidence="1">
    <location>
        <position position="384"/>
    </location>
</feature>
<feature type="active site" evidence="1">
    <location>
        <position position="512"/>
    </location>
</feature>
<name>G6PI_METCA</name>
<dbReference type="EC" id="5.3.1.9" evidence="1"/>
<dbReference type="EMBL" id="AE017282">
    <property type="protein sequence ID" value="AAU92469.1"/>
    <property type="molecule type" value="Genomic_DNA"/>
</dbReference>
<dbReference type="RefSeq" id="WP_010960530.1">
    <property type="nucleotide sequence ID" value="NC_002977.6"/>
</dbReference>
<dbReference type="SMR" id="Q609I7"/>
<dbReference type="STRING" id="243233.MCA1247"/>
<dbReference type="GeneID" id="88223532"/>
<dbReference type="KEGG" id="mca:MCA1247"/>
<dbReference type="eggNOG" id="COG0166">
    <property type="taxonomic scope" value="Bacteria"/>
</dbReference>
<dbReference type="HOGENOM" id="CLU_017947_3_1_6"/>
<dbReference type="UniPathway" id="UPA00109">
    <property type="reaction ID" value="UER00181"/>
</dbReference>
<dbReference type="UniPathway" id="UPA00138"/>
<dbReference type="Proteomes" id="UP000006821">
    <property type="component" value="Chromosome"/>
</dbReference>
<dbReference type="GO" id="GO:0005829">
    <property type="term" value="C:cytosol"/>
    <property type="evidence" value="ECO:0007669"/>
    <property type="project" value="TreeGrafter"/>
</dbReference>
<dbReference type="GO" id="GO:0097367">
    <property type="term" value="F:carbohydrate derivative binding"/>
    <property type="evidence" value="ECO:0007669"/>
    <property type="project" value="InterPro"/>
</dbReference>
<dbReference type="GO" id="GO:0004347">
    <property type="term" value="F:glucose-6-phosphate isomerase activity"/>
    <property type="evidence" value="ECO:0007669"/>
    <property type="project" value="UniProtKB-UniRule"/>
</dbReference>
<dbReference type="GO" id="GO:0048029">
    <property type="term" value="F:monosaccharide binding"/>
    <property type="evidence" value="ECO:0007669"/>
    <property type="project" value="TreeGrafter"/>
</dbReference>
<dbReference type="GO" id="GO:0006094">
    <property type="term" value="P:gluconeogenesis"/>
    <property type="evidence" value="ECO:0007669"/>
    <property type="project" value="UniProtKB-UniRule"/>
</dbReference>
<dbReference type="GO" id="GO:0051156">
    <property type="term" value="P:glucose 6-phosphate metabolic process"/>
    <property type="evidence" value="ECO:0007669"/>
    <property type="project" value="TreeGrafter"/>
</dbReference>
<dbReference type="GO" id="GO:0006096">
    <property type="term" value="P:glycolytic process"/>
    <property type="evidence" value="ECO:0007669"/>
    <property type="project" value="UniProtKB-UniRule"/>
</dbReference>
<dbReference type="CDD" id="cd05015">
    <property type="entry name" value="SIS_PGI_1"/>
    <property type="match status" value="1"/>
</dbReference>
<dbReference type="CDD" id="cd05016">
    <property type="entry name" value="SIS_PGI_2"/>
    <property type="match status" value="1"/>
</dbReference>
<dbReference type="FunFam" id="1.10.1390.10:FF:000001">
    <property type="entry name" value="Glucose-6-phosphate isomerase"/>
    <property type="match status" value="1"/>
</dbReference>
<dbReference type="FunFam" id="3.40.50.10490:FF:000004">
    <property type="entry name" value="Glucose-6-phosphate isomerase"/>
    <property type="match status" value="1"/>
</dbReference>
<dbReference type="Gene3D" id="1.10.1390.10">
    <property type="match status" value="1"/>
</dbReference>
<dbReference type="Gene3D" id="3.40.50.10490">
    <property type="entry name" value="Glucose-6-phosphate isomerase like protein, domain 1"/>
    <property type="match status" value="2"/>
</dbReference>
<dbReference type="HAMAP" id="MF_00473">
    <property type="entry name" value="G6P_isomerase"/>
    <property type="match status" value="1"/>
</dbReference>
<dbReference type="InterPro" id="IPR001672">
    <property type="entry name" value="G6P_Isomerase"/>
</dbReference>
<dbReference type="InterPro" id="IPR023096">
    <property type="entry name" value="G6P_Isomerase_C"/>
</dbReference>
<dbReference type="InterPro" id="IPR018189">
    <property type="entry name" value="Phosphoglucose_isomerase_CS"/>
</dbReference>
<dbReference type="InterPro" id="IPR046348">
    <property type="entry name" value="SIS_dom_sf"/>
</dbReference>
<dbReference type="InterPro" id="IPR035476">
    <property type="entry name" value="SIS_PGI_1"/>
</dbReference>
<dbReference type="InterPro" id="IPR035482">
    <property type="entry name" value="SIS_PGI_2"/>
</dbReference>
<dbReference type="NCBIfam" id="NF001211">
    <property type="entry name" value="PRK00179.1"/>
    <property type="match status" value="1"/>
</dbReference>
<dbReference type="PANTHER" id="PTHR11469">
    <property type="entry name" value="GLUCOSE-6-PHOSPHATE ISOMERASE"/>
    <property type="match status" value="1"/>
</dbReference>
<dbReference type="PANTHER" id="PTHR11469:SF1">
    <property type="entry name" value="GLUCOSE-6-PHOSPHATE ISOMERASE"/>
    <property type="match status" value="1"/>
</dbReference>
<dbReference type="Pfam" id="PF00342">
    <property type="entry name" value="PGI"/>
    <property type="match status" value="1"/>
</dbReference>
<dbReference type="PRINTS" id="PR00662">
    <property type="entry name" value="G6PISOMERASE"/>
</dbReference>
<dbReference type="SUPFAM" id="SSF53697">
    <property type="entry name" value="SIS domain"/>
    <property type="match status" value="1"/>
</dbReference>
<dbReference type="PROSITE" id="PS00765">
    <property type="entry name" value="P_GLUCOSE_ISOMERASE_1"/>
    <property type="match status" value="1"/>
</dbReference>
<dbReference type="PROSITE" id="PS00174">
    <property type="entry name" value="P_GLUCOSE_ISOMERASE_2"/>
    <property type="match status" value="1"/>
</dbReference>
<dbReference type="PROSITE" id="PS51463">
    <property type="entry name" value="P_GLUCOSE_ISOMERASE_3"/>
    <property type="match status" value="1"/>
</dbReference>
<keyword id="KW-0963">Cytoplasm</keyword>
<keyword id="KW-0312">Gluconeogenesis</keyword>
<keyword id="KW-0324">Glycolysis</keyword>
<keyword id="KW-0413">Isomerase</keyword>
<keyword id="KW-1185">Reference proteome</keyword>
<proteinExistence type="inferred from homology"/>
<sequence>MPQSTDLPAWRTLSEHFKTIAPRHMRDMFADDPGRFEAFSVRLGDLLFDYSKNRITRETVATLIQLAEEAGLREKIDAMFRGERLNVTENRAVLHVALRNRSNRPIRVDGKDVMPEVNRVLDRMRRFSQSVRTGEWRGATGKAITDVVNIGIGGSDLGPKMVVKALQPYADPRLRAHFVSNVDESDLVEILRPLNPETTLFVVASKTFTTQETMTNGRSARAWFLERISDESAIARHFVAISTNRNKVAEFGIDPRNMFEFWDWVGGRYSLWSAIGLPIALSVGMDRFEELLEGAHFVDEHFRTAPFERNIPVLMGLLGIWYINFFGAQSHAVLPYDQYLEDLPAHLQQADMESNGKTVDVEGRPVNYSTGPVIFGQPGTNGQHAFYQLLHQGSMLVPCDFLAAAESHHPLAEHHDILISNFLAQTEALMRGRTTDEARQEIASEELPPERLEALAAAKTFPGNKPTNSFLYRRLDPHTLGMLIALYEHKIFTQGVIWYINSFDQMGVELGKQLAKTILAELPGDAPVASHDASTNGLIRYFKSLR</sequence>
<organism>
    <name type="scientific">Methylococcus capsulatus (strain ATCC 33009 / NCIMB 11132 / Bath)</name>
    <dbReference type="NCBI Taxonomy" id="243233"/>
    <lineage>
        <taxon>Bacteria</taxon>
        <taxon>Pseudomonadati</taxon>
        <taxon>Pseudomonadota</taxon>
        <taxon>Gammaproteobacteria</taxon>
        <taxon>Methylococcales</taxon>
        <taxon>Methylococcaceae</taxon>
        <taxon>Methylococcus</taxon>
    </lineage>
</organism>
<comment type="function">
    <text evidence="1">Catalyzes the reversible isomerization of glucose-6-phosphate to fructose-6-phosphate.</text>
</comment>
<comment type="catalytic activity">
    <reaction evidence="1">
        <text>alpha-D-glucose 6-phosphate = beta-D-fructose 6-phosphate</text>
        <dbReference type="Rhea" id="RHEA:11816"/>
        <dbReference type="ChEBI" id="CHEBI:57634"/>
        <dbReference type="ChEBI" id="CHEBI:58225"/>
        <dbReference type="EC" id="5.3.1.9"/>
    </reaction>
</comment>
<comment type="pathway">
    <text evidence="1">Carbohydrate biosynthesis; gluconeogenesis.</text>
</comment>
<comment type="pathway">
    <text evidence="1">Carbohydrate degradation; glycolysis; D-glyceraldehyde 3-phosphate and glycerone phosphate from D-glucose: step 2/4.</text>
</comment>
<comment type="subcellular location">
    <subcellularLocation>
        <location evidence="1">Cytoplasm</location>
    </subcellularLocation>
</comment>
<comment type="similarity">
    <text evidence="1">Belongs to the GPI family.</text>
</comment>
<accession>Q609I7</accession>
<reference key="1">
    <citation type="journal article" date="2004" name="PLoS Biol.">
        <title>Genomic insights into methanotrophy: the complete genome sequence of Methylococcus capsulatus (Bath).</title>
        <authorList>
            <person name="Ward N.L."/>
            <person name="Larsen O."/>
            <person name="Sakwa J."/>
            <person name="Bruseth L."/>
            <person name="Khouri H.M."/>
            <person name="Durkin A.S."/>
            <person name="Dimitrov G."/>
            <person name="Jiang L."/>
            <person name="Scanlan D."/>
            <person name="Kang K.H."/>
            <person name="Lewis M.R."/>
            <person name="Nelson K.E."/>
            <person name="Methe B.A."/>
            <person name="Wu M."/>
            <person name="Heidelberg J.F."/>
            <person name="Paulsen I.T."/>
            <person name="Fouts D.E."/>
            <person name="Ravel J."/>
            <person name="Tettelin H."/>
            <person name="Ren Q."/>
            <person name="Read T.D."/>
            <person name="DeBoy R.T."/>
            <person name="Seshadri R."/>
            <person name="Salzberg S.L."/>
            <person name="Jensen H.B."/>
            <person name="Birkeland N.K."/>
            <person name="Nelson W.C."/>
            <person name="Dodson R.J."/>
            <person name="Grindhaug S.H."/>
            <person name="Holt I.E."/>
            <person name="Eidhammer I."/>
            <person name="Jonasen I."/>
            <person name="Vanaken S."/>
            <person name="Utterback T.R."/>
            <person name="Feldblyum T.V."/>
            <person name="Fraser C.M."/>
            <person name="Lillehaug J.R."/>
            <person name="Eisen J.A."/>
        </authorList>
    </citation>
    <scope>NUCLEOTIDE SEQUENCE [LARGE SCALE GENOMIC DNA]</scope>
    <source>
        <strain>ATCC 33009 / NCIMB 11132 / Bath</strain>
    </source>
</reference>